<gene>
    <name evidence="2" type="primary">YTHDF2</name>
</gene>
<keyword id="KW-0007">Acetylation</keyword>
<keyword id="KW-0131">Cell cycle</keyword>
<keyword id="KW-0132">Cell division</keyword>
<keyword id="KW-0963">Cytoplasm</keyword>
<keyword id="KW-0221">Differentiation</keyword>
<keyword id="KW-0391">Immunity</keyword>
<keyword id="KW-0399">Innate immunity</keyword>
<keyword id="KW-0498">Mitosis</keyword>
<keyword id="KW-0539">Nucleus</keyword>
<keyword id="KW-0896">Oogenesis</keyword>
<keyword id="KW-0597">Phosphoprotein</keyword>
<keyword id="KW-1185">Reference proteome</keyword>
<keyword id="KW-0694">RNA-binding</keyword>
<keyword id="KW-0744">Spermatogenesis</keyword>
<keyword id="KW-0832">Ubl conjugation</keyword>
<feature type="initiator methionine" description="Removed" evidence="3">
    <location>
        <position position="1"/>
    </location>
</feature>
<feature type="chain" id="PRO_0000284978" description="YTH domain-containing family protein 2">
    <location>
        <begin position="2"/>
        <end position="580"/>
    </location>
</feature>
<feature type="domain" description="YTH" evidence="4">
    <location>
        <begin position="411"/>
        <end position="545"/>
    </location>
</feature>
<feature type="region of interest" description="Disordered" evidence="5">
    <location>
        <begin position="1"/>
        <end position="45"/>
    </location>
</feature>
<feature type="region of interest" description="Localization to mRNA processing bodies (P-bodies)" evidence="3">
    <location>
        <begin position="2"/>
        <end position="385"/>
    </location>
</feature>
<feature type="region of interest" description="Disordered" evidence="5">
    <location>
        <begin position="247"/>
        <end position="388"/>
    </location>
</feature>
<feature type="region of interest" description="Interaction with m6A-containing mRNAs" evidence="3">
    <location>
        <begin position="386"/>
        <end position="580"/>
    </location>
</feature>
<feature type="compositionally biased region" description="Polar residues" evidence="5">
    <location>
        <begin position="291"/>
        <end position="317"/>
    </location>
</feature>
<feature type="compositionally biased region" description="Low complexity" evidence="5">
    <location>
        <begin position="338"/>
        <end position="350"/>
    </location>
</feature>
<feature type="compositionally biased region" description="Gly residues" evidence="5">
    <location>
        <begin position="360"/>
        <end position="372"/>
    </location>
</feature>
<feature type="compositionally biased region" description="Polar residues" evidence="5">
    <location>
        <begin position="373"/>
        <end position="384"/>
    </location>
</feature>
<feature type="binding site" evidence="3">
    <location>
        <begin position="417"/>
        <end position="419"/>
    </location>
    <ligand>
        <name>RNA</name>
        <dbReference type="ChEBI" id="CHEBI:33697"/>
    </ligand>
    <ligandPart>
        <name>N(6)-methyladenosine 5'-phosphate residue</name>
        <dbReference type="ChEBI" id="CHEBI:74449"/>
    </ligandPart>
</feature>
<feature type="binding site" evidence="3">
    <location>
        <position position="423"/>
    </location>
    <ligand>
        <name>RNA</name>
        <dbReference type="ChEBI" id="CHEBI:33697"/>
    </ligand>
    <ligandPart>
        <name>N(6)-methyladenosine 5'-phosphate residue</name>
        <dbReference type="ChEBI" id="CHEBI:74449"/>
    </ligandPart>
</feature>
<feature type="binding site" evidence="3">
    <location>
        <begin position="433"/>
        <end position="434"/>
    </location>
    <ligand>
        <name>RNA</name>
        <dbReference type="ChEBI" id="CHEBI:33697"/>
    </ligand>
    <ligandPart>
        <name>N(6)-methyladenosine 5'-phosphate residue</name>
        <dbReference type="ChEBI" id="CHEBI:74449"/>
    </ligandPart>
</feature>
<feature type="binding site" evidence="3">
    <location>
        <position position="463"/>
    </location>
    <ligand>
        <name>RNA</name>
        <dbReference type="ChEBI" id="CHEBI:33697"/>
    </ligand>
    <ligandPart>
        <name>N(6)-methyladenosine 5'-phosphate residue</name>
        <dbReference type="ChEBI" id="CHEBI:74449"/>
    </ligandPart>
</feature>
<feature type="binding site" evidence="3">
    <location>
        <position position="487"/>
    </location>
    <ligand>
        <name>RNA</name>
        <dbReference type="ChEBI" id="CHEBI:33697"/>
    </ligand>
    <ligandPart>
        <name>N(6)-methyladenosine 5'-phosphate residue</name>
        <dbReference type="ChEBI" id="CHEBI:74449"/>
    </ligandPart>
</feature>
<feature type="binding site" evidence="3">
    <location>
        <position position="492"/>
    </location>
    <ligand>
        <name>RNA</name>
        <dbReference type="ChEBI" id="CHEBI:33697"/>
    </ligand>
    <ligandPart>
        <name>N(6)-methyladenosine 5'-phosphate residue</name>
        <dbReference type="ChEBI" id="CHEBI:74449"/>
    </ligandPart>
</feature>
<feature type="modified residue" description="N-acetylserine" evidence="3">
    <location>
        <position position="2"/>
    </location>
</feature>
<feature type="modified residue" description="Phosphoserine" evidence="3">
    <location>
        <position position="2"/>
    </location>
</feature>
<feature type="modified residue" description="Phosphoserine" evidence="3">
    <location>
        <position position="4"/>
    </location>
</feature>
<feature type="modified residue" description="Phosphoserine" evidence="3">
    <location>
        <position position="5"/>
    </location>
</feature>
<feature type="modified residue" description="Phosphoserine" evidence="1">
    <location>
        <position position="22"/>
    </location>
</feature>
<feature type="modified residue" description="Phosphoserine" evidence="3">
    <location>
        <position position="39"/>
    </location>
</feature>
<feature type="modified residue" description="Phosphoserine" evidence="3">
    <location>
        <position position="196"/>
    </location>
</feature>
<feature type="modified residue" description="Phosphoserine" evidence="3">
    <location>
        <position position="360"/>
    </location>
</feature>
<feature type="modified residue" description="Phosphoserine" evidence="3">
    <location>
        <position position="395"/>
    </location>
</feature>
<name>YTHD2_BOVIN</name>
<reference key="1">
    <citation type="submission" date="2006-08" db="EMBL/GenBank/DDBJ databases">
        <authorList>
            <consortium name="NIH - Mammalian Gene Collection (MGC) project"/>
        </authorList>
    </citation>
    <scope>NUCLEOTIDE SEQUENCE [LARGE SCALE MRNA]</scope>
    <source>
        <strain>Hereford</strain>
        <tissue>Fetal skin</tissue>
    </source>
</reference>
<accession>Q0VCZ3</accession>
<dbReference type="EMBL" id="BC119920">
    <property type="protein sequence ID" value="AAI19921.1"/>
    <property type="molecule type" value="mRNA"/>
</dbReference>
<dbReference type="RefSeq" id="NP_001069721.1">
    <property type="nucleotide sequence ID" value="NM_001076253.1"/>
</dbReference>
<dbReference type="SMR" id="Q0VCZ3"/>
<dbReference type="FunCoup" id="Q0VCZ3">
    <property type="interactions" value="4613"/>
</dbReference>
<dbReference type="STRING" id="9913.ENSBTAP00000020940"/>
<dbReference type="PaxDb" id="9913-ENSBTAP00000020940"/>
<dbReference type="Ensembl" id="ENSBTAT00000020940.5">
    <property type="protein sequence ID" value="ENSBTAP00000020940.3"/>
    <property type="gene ID" value="ENSBTAG00000015771.5"/>
</dbReference>
<dbReference type="GeneID" id="541050"/>
<dbReference type="KEGG" id="bta:541050"/>
<dbReference type="CTD" id="51441"/>
<dbReference type="VEuPathDB" id="HostDB:ENSBTAG00000015771"/>
<dbReference type="VGNC" id="VGNC:37042">
    <property type="gene designation" value="YTHDF2"/>
</dbReference>
<dbReference type="eggNOG" id="KOG1901">
    <property type="taxonomic scope" value="Eukaryota"/>
</dbReference>
<dbReference type="GeneTree" id="ENSGT00940000156761"/>
<dbReference type="HOGENOM" id="CLU_022715_0_0_1"/>
<dbReference type="InParanoid" id="Q0VCZ3"/>
<dbReference type="OMA" id="SPQARPX"/>
<dbReference type="OrthoDB" id="306690at2759"/>
<dbReference type="TreeFam" id="TF323736"/>
<dbReference type="Proteomes" id="UP000009136">
    <property type="component" value="Chromosome 2"/>
</dbReference>
<dbReference type="Bgee" id="ENSBTAG00000015771">
    <property type="expression patterns" value="Expressed in spermatid and 104 other cell types or tissues"/>
</dbReference>
<dbReference type="GO" id="GO:0034451">
    <property type="term" value="C:centriolar satellite"/>
    <property type="evidence" value="ECO:0007669"/>
    <property type="project" value="Ensembl"/>
</dbReference>
<dbReference type="GO" id="GO:0005737">
    <property type="term" value="C:cytoplasm"/>
    <property type="evidence" value="ECO:0000250"/>
    <property type="project" value="UniProtKB"/>
</dbReference>
<dbReference type="GO" id="GO:0010494">
    <property type="term" value="C:cytoplasmic stress granule"/>
    <property type="evidence" value="ECO:0000250"/>
    <property type="project" value="UniProtKB"/>
</dbReference>
<dbReference type="GO" id="GO:0005829">
    <property type="term" value="C:cytosol"/>
    <property type="evidence" value="ECO:0000250"/>
    <property type="project" value="UniProtKB"/>
</dbReference>
<dbReference type="GO" id="GO:0005634">
    <property type="term" value="C:nucleus"/>
    <property type="evidence" value="ECO:0000250"/>
    <property type="project" value="UniProtKB"/>
</dbReference>
<dbReference type="GO" id="GO:0000932">
    <property type="term" value="C:P-body"/>
    <property type="evidence" value="ECO:0000250"/>
    <property type="project" value="UniProtKB"/>
</dbReference>
<dbReference type="GO" id="GO:0062153">
    <property type="term" value="F:C5-methylcytidine-containing RNA reader activity"/>
    <property type="evidence" value="ECO:0000250"/>
    <property type="project" value="UniProtKB"/>
</dbReference>
<dbReference type="GO" id="GO:0003729">
    <property type="term" value="F:mRNA binding"/>
    <property type="evidence" value="ECO:0000318"/>
    <property type="project" value="GO_Central"/>
</dbReference>
<dbReference type="GO" id="GO:1990247">
    <property type="term" value="F:N6-methyladenosine-containing RNA reader activity"/>
    <property type="evidence" value="ECO:0000250"/>
    <property type="project" value="UniProtKB"/>
</dbReference>
<dbReference type="GO" id="GO:0048598">
    <property type="term" value="P:embryonic morphogenesis"/>
    <property type="evidence" value="ECO:0000250"/>
    <property type="project" value="UniProtKB"/>
</dbReference>
<dbReference type="GO" id="GO:0098508">
    <property type="term" value="P:endothelial to hematopoietic transition"/>
    <property type="evidence" value="ECO:0000250"/>
    <property type="project" value="UniProtKB"/>
</dbReference>
<dbReference type="GO" id="GO:0007276">
    <property type="term" value="P:gamete generation"/>
    <property type="evidence" value="ECO:0000250"/>
    <property type="project" value="UniProtKB"/>
</dbReference>
<dbReference type="GO" id="GO:0071425">
    <property type="term" value="P:hematopoietic stem cell proliferation"/>
    <property type="evidence" value="ECO:0000250"/>
    <property type="project" value="UniProtKB"/>
</dbReference>
<dbReference type="GO" id="GO:0045087">
    <property type="term" value="P:innate immune response"/>
    <property type="evidence" value="ECO:0007669"/>
    <property type="project" value="UniProtKB-KW"/>
</dbReference>
<dbReference type="GO" id="GO:0006402">
    <property type="term" value="P:mRNA catabolic process"/>
    <property type="evidence" value="ECO:0000250"/>
    <property type="project" value="UniProtKB"/>
</dbReference>
<dbReference type="GO" id="GO:0061157">
    <property type="term" value="P:mRNA destabilization"/>
    <property type="evidence" value="ECO:0000250"/>
    <property type="project" value="UniProtKB"/>
</dbReference>
<dbReference type="GO" id="GO:0045746">
    <property type="term" value="P:negative regulation of Notch signaling pathway"/>
    <property type="evidence" value="ECO:0000250"/>
    <property type="project" value="UniProtKB"/>
</dbReference>
<dbReference type="GO" id="GO:2000737">
    <property type="term" value="P:negative regulation of stem cell differentiation"/>
    <property type="evidence" value="ECO:0000250"/>
    <property type="project" value="UniProtKB"/>
</dbReference>
<dbReference type="GO" id="GO:0060339">
    <property type="term" value="P:negative regulation of type I interferon-mediated signaling pathway"/>
    <property type="evidence" value="ECO:0000250"/>
    <property type="project" value="UniProtKB"/>
</dbReference>
<dbReference type="GO" id="GO:0001556">
    <property type="term" value="P:oocyte maturation"/>
    <property type="evidence" value="ECO:0000250"/>
    <property type="project" value="UniProtKB"/>
</dbReference>
<dbReference type="GO" id="GO:0070925">
    <property type="term" value="P:organelle assembly"/>
    <property type="evidence" value="ECO:0000250"/>
    <property type="project" value="UniProtKB"/>
</dbReference>
<dbReference type="GO" id="GO:1903679">
    <property type="term" value="P:positive regulation of cap-independent translational initiation"/>
    <property type="evidence" value="ECO:0000250"/>
    <property type="project" value="UniProtKB"/>
</dbReference>
<dbReference type="GO" id="GO:0030155">
    <property type="term" value="P:regulation of cell adhesion"/>
    <property type="evidence" value="ECO:0000250"/>
    <property type="project" value="UniProtKB"/>
</dbReference>
<dbReference type="GO" id="GO:1902036">
    <property type="term" value="P:regulation of hematopoietic stem cell differentiation"/>
    <property type="evidence" value="ECO:0000250"/>
    <property type="project" value="UniProtKB"/>
</dbReference>
<dbReference type="GO" id="GO:1903538">
    <property type="term" value="P:regulation of meiotic cell cycle process involved in oocyte maturation"/>
    <property type="evidence" value="ECO:0000250"/>
    <property type="project" value="UniProtKB"/>
</dbReference>
<dbReference type="GO" id="GO:0043488">
    <property type="term" value="P:regulation of mRNA stability"/>
    <property type="evidence" value="ECO:0000250"/>
    <property type="project" value="UniProtKB"/>
</dbReference>
<dbReference type="GO" id="GO:0050767">
    <property type="term" value="P:regulation of neurogenesis"/>
    <property type="evidence" value="ECO:0000250"/>
    <property type="project" value="UniProtKB"/>
</dbReference>
<dbReference type="GO" id="GO:2000232">
    <property type="term" value="P:regulation of rRNA processing"/>
    <property type="evidence" value="ECO:0000250"/>
    <property type="project" value="UniProtKB"/>
</dbReference>
<dbReference type="GO" id="GO:0007284">
    <property type="term" value="P:spermatogonial cell division"/>
    <property type="evidence" value="ECO:0000250"/>
    <property type="project" value="UniProtKB"/>
</dbReference>
<dbReference type="GO" id="GO:0034063">
    <property type="term" value="P:stress granule assembly"/>
    <property type="evidence" value="ECO:0000250"/>
    <property type="project" value="UniProtKB"/>
</dbReference>
<dbReference type="CDD" id="cd21134">
    <property type="entry name" value="YTH"/>
    <property type="match status" value="1"/>
</dbReference>
<dbReference type="FunFam" id="3.10.590.10:FF:000001">
    <property type="entry name" value="YTH domain family 1, isoform CRA_a"/>
    <property type="match status" value="1"/>
</dbReference>
<dbReference type="Gene3D" id="3.10.590.10">
    <property type="entry name" value="ph1033 like domains"/>
    <property type="match status" value="1"/>
</dbReference>
<dbReference type="InterPro" id="IPR007275">
    <property type="entry name" value="YTH_domain"/>
</dbReference>
<dbReference type="InterPro" id="IPR045168">
    <property type="entry name" value="YTH_prot"/>
</dbReference>
<dbReference type="PANTHER" id="PTHR12357:SF8">
    <property type="entry name" value="YTH DOMAIN-CONTAINING FAMILY PROTEIN 2"/>
    <property type="match status" value="1"/>
</dbReference>
<dbReference type="PANTHER" id="PTHR12357">
    <property type="entry name" value="YTH YT521-B HOMOLOGY DOMAIN-CONTAINING"/>
    <property type="match status" value="1"/>
</dbReference>
<dbReference type="Pfam" id="PF04146">
    <property type="entry name" value="YTH"/>
    <property type="match status" value="1"/>
</dbReference>
<dbReference type="PROSITE" id="PS50882">
    <property type="entry name" value="YTH"/>
    <property type="match status" value="1"/>
</dbReference>
<protein>
    <recommendedName>
        <fullName evidence="6">YTH domain-containing family protein 2</fullName>
    </recommendedName>
</protein>
<evidence type="ECO:0000250" key="1">
    <source>
        <dbReference type="UniProtKB" id="Q7Z739"/>
    </source>
</evidence>
<evidence type="ECO:0000250" key="2">
    <source>
        <dbReference type="UniProtKB" id="Q91YT7"/>
    </source>
</evidence>
<evidence type="ECO:0000250" key="3">
    <source>
        <dbReference type="UniProtKB" id="Q9Y5A9"/>
    </source>
</evidence>
<evidence type="ECO:0000255" key="4">
    <source>
        <dbReference type="PROSITE-ProRule" id="PRU00225"/>
    </source>
</evidence>
<evidence type="ECO:0000256" key="5">
    <source>
        <dbReference type="SAM" id="MobiDB-lite"/>
    </source>
</evidence>
<evidence type="ECO:0000305" key="6"/>
<organism>
    <name type="scientific">Bos taurus</name>
    <name type="common">Bovine</name>
    <dbReference type="NCBI Taxonomy" id="9913"/>
    <lineage>
        <taxon>Eukaryota</taxon>
        <taxon>Metazoa</taxon>
        <taxon>Chordata</taxon>
        <taxon>Craniata</taxon>
        <taxon>Vertebrata</taxon>
        <taxon>Euteleostomi</taxon>
        <taxon>Mammalia</taxon>
        <taxon>Eutheria</taxon>
        <taxon>Laurasiatheria</taxon>
        <taxon>Artiodactyla</taxon>
        <taxon>Ruminantia</taxon>
        <taxon>Pecora</taxon>
        <taxon>Bovidae</taxon>
        <taxon>Bovinae</taxon>
        <taxon>Bos</taxon>
    </lineage>
</organism>
<comment type="function">
    <text evidence="2 3">Specifically recognizes and binds N6-methyladenosine (m6A)-containing RNAs, and regulates their stability. M6A is a modification present at internal sites of mRNAs and some non-coding RNAs and plays a role in mRNA stability and processing. Acts as a regulator of mRNA stability by promoting degradation of m6A-containing mRNAs via interaction with the CCR4-NOT and ribonuclease P/MRP complexes, depending on the context. The YTHDF paralogs (YTHDF1, YTHDF2 and YTHDF3) share m6A-containing mRNAs targets and act redundantly to mediate mRNA degradation and cellular differentiation. M6A-containing mRNAs containing a binding site for RIDA/HRSP12 (5'-GGUUC-3') are preferentially degraded by endoribonucleolytic cleavage: cooperative binding of RIDA/HRSP12 and YTHDF2 to transcripts leads to recruitment of the ribonuclease P/MRP complex. Other m6A-containing mRNAs undergo deadenylation via direct interaction between YTHDF2 and CNOT1, leading to recruitment of the CCR4-NOT and subsequent deadenylation of m6A-containing mRNAs (By similarity). Required maternally to regulate oocyte maturation: probably acts by binding to m6A-containing mRNAs, thereby regulating maternal transcript dosage during oocyte maturation, which is essential for the competence of oocytes to sustain early zygotic development. Also required during spermatogenesis: regulates spermagonial adhesion by promoting degradation of m6A-containing transcripts coding for matrix metallopeptidases (By similarity). Also involved in hematopoietic stem cells specification by binding to m6A-containing mRNAs, leading to promote their degradation (By similarity). Also acts as a regulator of neural development by promoting m6A-dependent degradation of neural development-related mRNA targets (By similarity). Inhibits neural specification of induced pluripotent stem cells by binding to methylated neural-specific mRNAs and promoting their degradation, thereby restraining neural differentiation. Regulates circadian regulation of hepatic lipid metabolism: acts by promoting m6A-dependent degradation of PPARA transcripts. Regulates the innate immune response to infection by inhibiting the type I interferon response: acts by binding to m6A-containing IFNB transcripts and promoting their degradation. May also act as a promoter of cap-independent mRNA translation following heat shock stress: upon stress, relocalizes to the nucleus and specifically binds mRNAs with some m6A methylation mark at their 5'-UTR, protecting demethylation of mRNAs by FTO, thereby promoting cap-independent mRNA translation. Regulates mitotic entry by promoting the phase-specific m6A-dependent degradation of WEE1 transcripts. Promotes formation of phase-separated membraneless compartments, such as P-bodies or stress granules, by undergoing liquid-liquid phase separation upon binding to mRNAs containing multiple m6A-modified residues: polymethylated mRNAs act as a multivalent scaffold for the binding of YTHDF proteins, juxtaposing their disordered regions and thereby leading to phase separation. The resulting mRNA-YTHDF complexes then partition into different endogenous phase-separated membraneless compartments, such as P-bodies, stress granules or neuronal RNA granules. May also recognize and bind RNAs modified by C5-methylcytosine (m5C) and act as a regulator of rRNA processing (By similarity).</text>
</comment>
<comment type="subunit">
    <text evidence="3">Interacts with CNOT1; interaction is direct and promotes recruitment of the CCR4-NOT complex. Interacts with YTHDF3. Interacts with RIDA/HRSP12; interaction leads to recruitment of the ribonuclease P/MRP complex.</text>
</comment>
<comment type="subcellular location">
    <subcellularLocation>
        <location evidence="3">Cytoplasm</location>
        <location evidence="3">Cytosol</location>
    </subcellularLocation>
    <subcellularLocation>
        <location evidence="3">Cytoplasm</location>
        <location evidence="3">P-body</location>
    </subcellularLocation>
    <subcellularLocation>
        <location evidence="3">Cytoplasm</location>
        <location evidence="3">Stress granule</location>
    </subcellularLocation>
    <subcellularLocation>
        <location evidence="3">Nucleus</location>
    </subcellularLocation>
    <text evidence="3">Localizes to the cytosol and relocates to the nucleus following heat shock stress. Can partition into different structures: into P-bodies in unstressed cells, and into stress granules during stress.</text>
</comment>
<comment type="domain">
    <text evidence="3">The disordered regions have the ability to interact with each other and to 'phase separate' into liquid droplets within the cytosol following binding to mRNAs containing multiple m6A-modified residues. This leads to the partition of m6A-containing mRNAs into membraneless compartments, where mRNAs may be stored, degraded or used to transport mRNAs to dendritic arbors in neurons.</text>
</comment>
<comment type="PTM">
    <text evidence="3">Ubiquitinated by the SCF(SKP2) complex, leading to its degradation.</text>
</comment>
<comment type="similarity">
    <text evidence="6">Belongs to the YTHDF family. YTHDF2 subfamily.</text>
</comment>
<sequence length="580" mass="62449">MSASSLLEQRPKGQGNKVQNGSVHQKDGLNDDDFEPYLSPQARPNNAYTAMSDSYLPSYYSPSIGFSYSLGEAAWSTGGDTAMPYLTSYGQLSNGEPHFLPDAMFGQPGALGSTPFLGQHGFNFFPSGIDFSAWGNNSSQGQSTQSSGYSSNYAYAPSSLGGAMIDGQSAFASETLNKAPGMNTIDQGMAALKLGSTEVASNVPKVVGSAVGSGSITSNIVASNSLPPATIAPPKPASWADIASKPAKQQPKLKTKNGIAGSSLPPPPIKHNMDIGTWDNKGPVAKAPSQALVQNIGQQPTQGSPQPVGQQANNSPPVAQASVGQQTQPLPPPPPQPAQLSVQQQAAQPTRWVAPRNRGSGFGHNGVDGNGVGQTQAGSGSTPSEPHPVLEKLRSINNYNPKDFDWNLKHGRVFIIKSYSEDDIHRSIKYNIWCSTEHGNKRLDAAYRSMNGKGPVYLLFSVNGSGHFCGVAEMKSAVDYNTCAGVWSQDKWKGRFDVRWIFVKDVPNSQLRHIRLENNENKPVTNSRDTQEVPLEKAKQVLKIIASYKHTTSIFDDFSHYEKRQEEEESVKKERQGRGK</sequence>
<proteinExistence type="evidence at transcript level"/>